<keyword id="KW-0028">Amino-acid biosynthesis</keyword>
<keyword id="KW-0368">Histidine biosynthesis</keyword>
<keyword id="KW-0378">Hydrolase</keyword>
<keyword id="KW-0486">Methionine biosynthesis</keyword>
<keyword id="KW-0511">Multifunctional enzyme</keyword>
<keyword id="KW-0521">NADP</keyword>
<keyword id="KW-0554">One-carbon metabolism</keyword>
<keyword id="KW-0560">Oxidoreductase</keyword>
<keyword id="KW-0658">Purine biosynthesis</keyword>
<keyword id="KW-1185">Reference proteome</keyword>
<feature type="chain" id="PRO_1000215603" description="Bifunctional protein FolD">
    <location>
        <begin position="1"/>
        <end position="303"/>
    </location>
</feature>
<feature type="binding site" evidence="1">
    <location>
        <begin position="169"/>
        <end position="171"/>
    </location>
    <ligand>
        <name>NADP(+)</name>
        <dbReference type="ChEBI" id="CHEBI:58349"/>
    </ligand>
</feature>
<feature type="binding site" evidence="1">
    <location>
        <position position="196"/>
    </location>
    <ligand>
        <name>NADP(+)</name>
        <dbReference type="ChEBI" id="CHEBI:58349"/>
    </ligand>
</feature>
<feature type="binding site" evidence="1">
    <location>
        <position position="237"/>
    </location>
    <ligand>
        <name>NADP(+)</name>
        <dbReference type="ChEBI" id="CHEBI:58349"/>
    </ligand>
</feature>
<dbReference type="EC" id="1.5.1.5" evidence="1"/>
<dbReference type="EC" id="3.5.4.9" evidence="1"/>
<dbReference type="EMBL" id="CP001628">
    <property type="protein sequence ID" value="ACS30010.1"/>
    <property type="molecule type" value="Genomic_DNA"/>
</dbReference>
<dbReference type="RefSeq" id="WP_010079360.1">
    <property type="nucleotide sequence ID" value="NC_012803.1"/>
</dbReference>
<dbReference type="SMR" id="C5C958"/>
<dbReference type="STRING" id="465515.Mlut_04690"/>
<dbReference type="EnsemblBacteria" id="ACS30010">
    <property type="protein sequence ID" value="ACS30010"/>
    <property type="gene ID" value="Mlut_04690"/>
</dbReference>
<dbReference type="GeneID" id="93344647"/>
<dbReference type="KEGG" id="mlu:Mlut_04690"/>
<dbReference type="PATRIC" id="fig|465515.4.peg.440"/>
<dbReference type="eggNOG" id="COG0190">
    <property type="taxonomic scope" value="Bacteria"/>
</dbReference>
<dbReference type="HOGENOM" id="CLU_034045_3_0_11"/>
<dbReference type="UniPathway" id="UPA00193"/>
<dbReference type="Proteomes" id="UP000000738">
    <property type="component" value="Chromosome"/>
</dbReference>
<dbReference type="GO" id="GO:0005829">
    <property type="term" value="C:cytosol"/>
    <property type="evidence" value="ECO:0007669"/>
    <property type="project" value="TreeGrafter"/>
</dbReference>
<dbReference type="GO" id="GO:0004477">
    <property type="term" value="F:methenyltetrahydrofolate cyclohydrolase activity"/>
    <property type="evidence" value="ECO:0007669"/>
    <property type="project" value="UniProtKB-UniRule"/>
</dbReference>
<dbReference type="GO" id="GO:0004488">
    <property type="term" value="F:methylenetetrahydrofolate dehydrogenase (NADP+) activity"/>
    <property type="evidence" value="ECO:0007669"/>
    <property type="project" value="UniProtKB-UniRule"/>
</dbReference>
<dbReference type="GO" id="GO:0000105">
    <property type="term" value="P:L-histidine biosynthetic process"/>
    <property type="evidence" value="ECO:0007669"/>
    <property type="project" value="UniProtKB-KW"/>
</dbReference>
<dbReference type="GO" id="GO:0009086">
    <property type="term" value="P:methionine biosynthetic process"/>
    <property type="evidence" value="ECO:0007669"/>
    <property type="project" value="UniProtKB-KW"/>
</dbReference>
<dbReference type="GO" id="GO:0006164">
    <property type="term" value="P:purine nucleotide biosynthetic process"/>
    <property type="evidence" value="ECO:0007669"/>
    <property type="project" value="UniProtKB-KW"/>
</dbReference>
<dbReference type="GO" id="GO:0035999">
    <property type="term" value="P:tetrahydrofolate interconversion"/>
    <property type="evidence" value="ECO:0007669"/>
    <property type="project" value="UniProtKB-UniRule"/>
</dbReference>
<dbReference type="CDD" id="cd01080">
    <property type="entry name" value="NAD_bind_m-THF_DH_Cyclohyd"/>
    <property type="match status" value="1"/>
</dbReference>
<dbReference type="FunFam" id="3.40.50.10860:FF:000005">
    <property type="entry name" value="C-1-tetrahydrofolate synthase, cytoplasmic, putative"/>
    <property type="match status" value="1"/>
</dbReference>
<dbReference type="Gene3D" id="3.40.50.10860">
    <property type="entry name" value="Leucine Dehydrogenase, chain A, domain 1"/>
    <property type="match status" value="1"/>
</dbReference>
<dbReference type="Gene3D" id="3.40.50.720">
    <property type="entry name" value="NAD(P)-binding Rossmann-like Domain"/>
    <property type="match status" value="1"/>
</dbReference>
<dbReference type="HAMAP" id="MF_01576">
    <property type="entry name" value="THF_DHG_CYH"/>
    <property type="match status" value="1"/>
</dbReference>
<dbReference type="InterPro" id="IPR046346">
    <property type="entry name" value="Aminoacid_DH-like_N_sf"/>
</dbReference>
<dbReference type="InterPro" id="IPR036291">
    <property type="entry name" value="NAD(P)-bd_dom_sf"/>
</dbReference>
<dbReference type="InterPro" id="IPR000672">
    <property type="entry name" value="THF_DH/CycHdrlase"/>
</dbReference>
<dbReference type="InterPro" id="IPR020630">
    <property type="entry name" value="THF_DH/CycHdrlase_cat_dom"/>
</dbReference>
<dbReference type="InterPro" id="IPR020631">
    <property type="entry name" value="THF_DH/CycHdrlase_NAD-bd_dom"/>
</dbReference>
<dbReference type="NCBIfam" id="NF010789">
    <property type="entry name" value="PRK14193.1"/>
    <property type="match status" value="1"/>
</dbReference>
<dbReference type="PANTHER" id="PTHR48099:SF5">
    <property type="entry name" value="C-1-TETRAHYDROFOLATE SYNTHASE, CYTOPLASMIC"/>
    <property type="match status" value="1"/>
</dbReference>
<dbReference type="PANTHER" id="PTHR48099">
    <property type="entry name" value="C-1-TETRAHYDROFOLATE SYNTHASE, CYTOPLASMIC-RELATED"/>
    <property type="match status" value="1"/>
</dbReference>
<dbReference type="Pfam" id="PF00763">
    <property type="entry name" value="THF_DHG_CYH"/>
    <property type="match status" value="1"/>
</dbReference>
<dbReference type="Pfam" id="PF02882">
    <property type="entry name" value="THF_DHG_CYH_C"/>
    <property type="match status" value="1"/>
</dbReference>
<dbReference type="PRINTS" id="PR00085">
    <property type="entry name" value="THFDHDRGNASE"/>
</dbReference>
<dbReference type="SUPFAM" id="SSF53223">
    <property type="entry name" value="Aminoacid dehydrogenase-like, N-terminal domain"/>
    <property type="match status" value="1"/>
</dbReference>
<dbReference type="SUPFAM" id="SSF51735">
    <property type="entry name" value="NAD(P)-binding Rossmann-fold domains"/>
    <property type="match status" value="1"/>
</dbReference>
<gene>
    <name evidence="1" type="primary">folD</name>
    <name type="ordered locus">Mlut_04690</name>
</gene>
<evidence type="ECO:0000255" key="1">
    <source>
        <dbReference type="HAMAP-Rule" id="MF_01576"/>
    </source>
</evidence>
<accession>C5C958</accession>
<sequence length="303" mass="31535">MTAKVLDGKATAAAIKEELRGRVAALAERGRTPGLGTLLVGEDAGSQKYVAGKHRDCAEVGIESIQRELPADATEEQILDVVRELNEDPACTGYIVQLPLPKHVDTQKVLEAIDPDKDADGLHPMNLGRLVASVGGELDSPLPCTPAGCVELLRHHGVELAGKHVLVIGRGVTIGRPAGLVLTRREVNATVTLAHTGTTNLDELLASADVVIAAAGSAHMVTPEQVKEGVIVLDVGVSRVTGEDGKSRVLGDVDPAVKEKAAWMAPNPGGVGPMTRVMLLANVVEAAERAADGENWAGERAGA</sequence>
<name>FOLD_MICLC</name>
<protein>
    <recommendedName>
        <fullName evidence="1">Bifunctional protein FolD</fullName>
    </recommendedName>
    <domain>
        <recommendedName>
            <fullName evidence="1">Methylenetetrahydrofolate dehydrogenase</fullName>
            <ecNumber evidence="1">1.5.1.5</ecNumber>
        </recommendedName>
    </domain>
    <domain>
        <recommendedName>
            <fullName evidence="1">Methenyltetrahydrofolate cyclohydrolase</fullName>
            <ecNumber evidence="1">3.5.4.9</ecNumber>
        </recommendedName>
    </domain>
</protein>
<reference key="1">
    <citation type="journal article" date="2010" name="J. Bacteriol.">
        <title>Genome sequence of the Fleming strain of Micrococcus luteus, a simple free-living actinobacterium.</title>
        <authorList>
            <person name="Young M."/>
            <person name="Artsatbanov V."/>
            <person name="Beller H.R."/>
            <person name="Chandra G."/>
            <person name="Chater K.F."/>
            <person name="Dover L.G."/>
            <person name="Goh E.B."/>
            <person name="Kahan T."/>
            <person name="Kaprelyants A.S."/>
            <person name="Kyrpides N."/>
            <person name="Lapidus A."/>
            <person name="Lowry S.R."/>
            <person name="Lykidis A."/>
            <person name="Mahillon J."/>
            <person name="Markowitz V."/>
            <person name="Mavromatis K."/>
            <person name="Mukamolova G.V."/>
            <person name="Oren A."/>
            <person name="Rokem J.S."/>
            <person name="Smith M.C."/>
            <person name="Young D.I."/>
            <person name="Greenblatt C.L."/>
        </authorList>
    </citation>
    <scope>NUCLEOTIDE SEQUENCE [LARGE SCALE GENOMIC DNA]</scope>
    <source>
        <strain>ATCC 4698 / DSM 20030 / JCM 1464 / CCM 169 / CCUG 5858 / IAM 1056 / NBRC 3333 / NCIMB 9278 / NCTC 2665 / VKM Ac-2230</strain>
    </source>
</reference>
<organism>
    <name type="scientific">Micrococcus luteus (strain ATCC 4698 / DSM 20030 / JCM 1464 / CCM 169 / CCUG 5858 / IAM 1056 / NBRC 3333 / NCIMB 9278 / NCTC 2665 / VKM Ac-2230)</name>
    <name type="common">Micrococcus lysodeikticus</name>
    <dbReference type="NCBI Taxonomy" id="465515"/>
    <lineage>
        <taxon>Bacteria</taxon>
        <taxon>Bacillati</taxon>
        <taxon>Actinomycetota</taxon>
        <taxon>Actinomycetes</taxon>
        <taxon>Micrococcales</taxon>
        <taxon>Micrococcaceae</taxon>
        <taxon>Micrococcus</taxon>
    </lineage>
</organism>
<proteinExistence type="inferred from homology"/>
<comment type="function">
    <text evidence="1">Catalyzes the oxidation of 5,10-methylenetetrahydrofolate to 5,10-methenyltetrahydrofolate and then the hydrolysis of 5,10-methenyltetrahydrofolate to 10-formyltetrahydrofolate.</text>
</comment>
<comment type="catalytic activity">
    <reaction evidence="1">
        <text>(6R)-5,10-methylene-5,6,7,8-tetrahydrofolate + NADP(+) = (6R)-5,10-methenyltetrahydrofolate + NADPH</text>
        <dbReference type="Rhea" id="RHEA:22812"/>
        <dbReference type="ChEBI" id="CHEBI:15636"/>
        <dbReference type="ChEBI" id="CHEBI:57455"/>
        <dbReference type="ChEBI" id="CHEBI:57783"/>
        <dbReference type="ChEBI" id="CHEBI:58349"/>
        <dbReference type="EC" id="1.5.1.5"/>
    </reaction>
</comment>
<comment type="catalytic activity">
    <reaction evidence="1">
        <text>(6R)-5,10-methenyltetrahydrofolate + H2O = (6R)-10-formyltetrahydrofolate + H(+)</text>
        <dbReference type="Rhea" id="RHEA:23700"/>
        <dbReference type="ChEBI" id="CHEBI:15377"/>
        <dbReference type="ChEBI" id="CHEBI:15378"/>
        <dbReference type="ChEBI" id="CHEBI:57455"/>
        <dbReference type="ChEBI" id="CHEBI:195366"/>
        <dbReference type="EC" id="3.5.4.9"/>
    </reaction>
</comment>
<comment type="pathway">
    <text evidence="1">One-carbon metabolism; tetrahydrofolate interconversion.</text>
</comment>
<comment type="subunit">
    <text evidence="1">Homodimer.</text>
</comment>
<comment type="similarity">
    <text evidence="1">Belongs to the tetrahydrofolate dehydrogenase/cyclohydrolase family.</text>
</comment>